<protein>
    <recommendedName>
        <fullName evidence="1">Peptide methionine sulfoxide reductase MsrA</fullName>
        <shortName evidence="1">Protein-methionine-S-oxide reductase</shortName>
        <ecNumber evidence="1">1.8.4.11</ecNumber>
    </recommendedName>
    <alternativeName>
        <fullName evidence="1">Peptide-methionine (S)-S-oxide reductase</fullName>
        <shortName evidence="1">Peptide Met(O) reductase</shortName>
    </alternativeName>
</protein>
<proteinExistence type="inferred from homology"/>
<evidence type="ECO:0000255" key="1">
    <source>
        <dbReference type="HAMAP-Rule" id="MF_01401"/>
    </source>
</evidence>
<feature type="chain" id="PRO_0000138612" description="Peptide methionine sulfoxide reductase MsrA">
    <location>
        <begin position="1"/>
        <end position="216"/>
    </location>
</feature>
<feature type="active site" evidence="1">
    <location>
        <position position="54"/>
    </location>
</feature>
<gene>
    <name evidence="1" type="primary">msrA</name>
    <name type="synonym">pms</name>
    <name type="ordered locus">XCC0828</name>
</gene>
<comment type="function">
    <text evidence="1">Has an important function as a repair enzyme for proteins that have been inactivated by oxidation. Catalyzes the reversible oxidation-reduction of methionine sulfoxide in proteins to methionine.</text>
</comment>
<comment type="catalytic activity">
    <reaction evidence="1">
        <text>L-methionyl-[protein] + [thioredoxin]-disulfide + H2O = L-methionyl-(S)-S-oxide-[protein] + [thioredoxin]-dithiol</text>
        <dbReference type="Rhea" id="RHEA:14217"/>
        <dbReference type="Rhea" id="RHEA-COMP:10698"/>
        <dbReference type="Rhea" id="RHEA-COMP:10700"/>
        <dbReference type="Rhea" id="RHEA-COMP:12313"/>
        <dbReference type="Rhea" id="RHEA-COMP:12315"/>
        <dbReference type="ChEBI" id="CHEBI:15377"/>
        <dbReference type="ChEBI" id="CHEBI:16044"/>
        <dbReference type="ChEBI" id="CHEBI:29950"/>
        <dbReference type="ChEBI" id="CHEBI:44120"/>
        <dbReference type="ChEBI" id="CHEBI:50058"/>
        <dbReference type="EC" id="1.8.4.11"/>
    </reaction>
</comment>
<comment type="catalytic activity">
    <reaction evidence="1">
        <text>[thioredoxin]-disulfide + L-methionine + H2O = L-methionine (S)-S-oxide + [thioredoxin]-dithiol</text>
        <dbReference type="Rhea" id="RHEA:19993"/>
        <dbReference type="Rhea" id="RHEA-COMP:10698"/>
        <dbReference type="Rhea" id="RHEA-COMP:10700"/>
        <dbReference type="ChEBI" id="CHEBI:15377"/>
        <dbReference type="ChEBI" id="CHEBI:29950"/>
        <dbReference type="ChEBI" id="CHEBI:50058"/>
        <dbReference type="ChEBI" id="CHEBI:57844"/>
        <dbReference type="ChEBI" id="CHEBI:58772"/>
        <dbReference type="EC" id="1.8.4.11"/>
    </reaction>
</comment>
<comment type="similarity">
    <text evidence="1">Belongs to the MsrA Met sulfoxide reductase family.</text>
</comment>
<keyword id="KW-0560">Oxidoreductase</keyword>
<keyword id="KW-1185">Reference proteome</keyword>
<organism>
    <name type="scientific">Xanthomonas campestris pv. campestris (strain ATCC 33913 / DSM 3586 / NCPPB 528 / LMG 568 / P 25)</name>
    <dbReference type="NCBI Taxonomy" id="190485"/>
    <lineage>
        <taxon>Bacteria</taxon>
        <taxon>Pseudomonadati</taxon>
        <taxon>Pseudomonadota</taxon>
        <taxon>Gammaproteobacteria</taxon>
        <taxon>Lysobacterales</taxon>
        <taxon>Lysobacteraceae</taxon>
        <taxon>Xanthomonas</taxon>
    </lineage>
</organism>
<reference key="1">
    <citation type="journal article" date="2002" name="Nature">
        <title>Comparison of the genomes of two Xanthomonas pathogens with differing host specificities.</title>
        <authorList>
            <person name="da Silva A.C.R."/>
            <person name="Ferro J.A."/>
            <person name="Reinach F.C."/>
            <person name="Farah C.S."/>
            <person name="Furlan L.R."/>
            <person name="Quaggio R.B."/>
            <person name="Monteiro-Vitorello C.B."/>
            <person name="Van Sluys M.A."/>
            <person name="Almeida N.F. Jr."/>
            <person name="Alves L.M.C."/>
            <person name="do Amaral A.M."/>
            <person name="Bertolini M.C."/>
            <person name="Camargo L.E.A."/>
            <person name="Camarotte G."/>
            <person name="Cannavan F."/>
            <person name="Cardozo J."/>
            <person name="Chambergo F."/>
            <person name="Ciapina L.P."/>
            <person name="Cicarelli R.M.B."/>
            <person name="Coutinho L.L."/>
            <person name="Cursino-Santos J.R."/>
            <person name="El-Dorry H."/>
            <person name="Faria J.B."/>
            <person name="Ferreira A.J.S."/>
            <person name="Ferreira R.C.C."/>
            <person name="Ferro M.I.T."/>
            <person name="Formighieri E.F."/>
            <person name="Franco M.C."/>
            <person name="Greggio C.C."/>
            <person name="Gruber A."/>
            <person name="Katsuyama A.M."/>
            <person name="Kishi L.T."/>
            <person name="Leite R.P."/>
            <person name="Lemos E.G.M."/>
            <person name="Lemos M.V.F."/>
            <person name="Locali E.C."/>
            <person name="Machado M.A."/>
            <person name="Madeira A.M.B.N."/>
            <person name="Martinez-Rossi N.M."/>
            <person name="Martins E.C."/>
            <person name="Meidanis J."/>
            <person name="Menck C.F.M."/>
            <person name="Miyaki C.Y."/>
            <person name="Moon D.H."/>
            <person name="Moreira L.M."/>
            <person name="Novo M.T.M."/>
            <person name="Okura V.K."/>
            <person name="Oliveira M.C."/>
            <person name="Oliveira V.R."/>
            <person name="Pereira H.A."/>
            <person name="Rossi A."/>
            <person name="Sena J.A.D."/>
            <person name="Silva C."/>
            <person name="de Souza R.F."/>
            <person name="Spinola L.A.F."/>
            <person name="Takita M.A."/>
            <person name="Tamura R.E."/>
            <person name="Teixeira E.C."/>
            <person name="Tezza R.I.D."/>
            <person name="Trindade dos Santos M."/>
            <person name="Truffi D."/>
            <person name="Tsai S.M."/>
            <person name="White F.F."/>
            <person name="Setubal J.C."/>
            <person name="Kitajima J.P."/>
        </authorList>
    </citation>
    <scope>NUCLEOTIDE SEQUENCE [LARGE SCALE GENOMIC DNA]</scope>
    <source>
        <strain>ATCC 33913 / DSM 3586 / NCPPB 528 / LMG 568 / P 25</strain>
    </source>
</reference>
<name>MSRA_XANCP</name>
<accession>Q8PCA6</accession>
<dbReference type="EC" id="1.8.4.11" evidence="1"/>
<dbReference type="EMBL" id="AE008922">
    <property type="protein sequence ID" value="AAM40143.1"/>
    <property type="molecule type" value="Genomic_DNA"/>
</dbReference>
<dbReference type="RefSeq" id="NP_636219.1">
    <property type="nucleotide sequence ID" value="NC_003902.1"/>
</dbReference>
<dbReference type="RefSeq" id="WP_011036064.1">
    <property type="nucleotide sequence ID" value="NC_003902.1"/>
</dbReference>
<dbReference type="SMR" id="Q8PCA6"/>
<dbReference type="STRING" id="190485.XCC0828"/>
<dbReference type="EnsemblBacteria" id="AAM40143">
    <property type="protein sequence ID" value="AAM40143"/>
    <property type="gene ID" value="XCC0828"/>
</dbReference>
<dbReference type="KEGG" id="xcc:XCC0828"/>
<dbReference type="PATRIC" id="fig|190485.4.peg.901"/>
<dbReference type="eggNOG" id="COG0225">
    <property type="taxonomic scope" value="Bacteria"/>
</dbReference>
<dbReference type="HOGENOM" id="CLU_031040_10_3_6"/>
<dbReference type="OrthoDB" id="4174719at2"/>
<dbReference type="Proteomes" id="UP000001010">
    <property type="component" value="Chromosome"/>
</dbReference>
<dbReference type="GO" id="GO:0005737">
    <property type="term" value="C:cytoplasm"/>
    <property type="evidence" value="ECO:0000318"/>
    <property type="project" value="GO_Central"/>
</dbReference>
<dbReference type="GO" id="GO:0036456">
    <property type="term" value="F:L-methionine-(S)-S-oxide reductase activity"/>
    <property type="evidence" value="ECO:0000318"/>
    <property type="project" value="GO_Central"/>
</dbReference>
<dbReference type="GO" id="GO:0008113">
    <property type="term" value="F:peptide-methionine (S)-S-oxide reductase activity"/>
    <property type="evidence" value="ECO:0000318"/>
    <property type="project" value="GO_Central"/>
</dbReference>
<dbReference type="GO" id="GO:0034599">
    <property type="term" value="P:cellular response to oxidative stress"/>
    <property type="evidence" value="ECO:0000318"/>
    <property type="project" value="GO_Central"/>
</dbReference>
<dbReference type="GO" id="GO:0036211">
    <property type="term" value="P:protein modification process"/>
    <property type="evidence" value="ECO:0007669"/>
    <property type="project" value="UniProtKB-UniRule"/>
</dbReference>
<dbReference type="FunFam" id="3.30.1060.10:FF:000001">
    <property type="entry name" value="Peptide methionine sulfoxide reductase MsrA"/>
    <property type="match status" value="1"/>
</dbReference>
<dbReference type="Gene3D" id="3.30.1060.10">
    <property type="entry name" value="Peptide methionine sulphoxide reductase MsrA"/>
    <property type="match status" value="1"/>
</dbReference>
<dbReference type="HAMAP" id="MF_01401">
    <property type="entry name" value="MsrA"/>
    <property type="match status" value="1"/>
</dbReference>
<dbReference type="InterPro" id="IPR002569">
    <property type="entry name" value="Met_Sox_Rdtase_MsrA_dom"/>
</dbReference>
<dbReference type="InterPro" id="IPR036509">
    <property type="entry name" value="Met_Sox_Rdtase_MsrA_sf"/>
</dbReference>
<dbReference type="InterPro" id="IPR050162">
    <property type="entry name" value="MsrA_MetSO_reductase"/>
</dbReference>
<dbReference type="NCBIfam" id="TIGR00401">
    <property type="entry name" value="msrA"/>
    <property type="match status" value="1"/>
</dbReference>
<dbReference type="PANTHER" id="PTHR42799">
    <property type="entry name" value="MITOCHONDRIAL PEPTIDE METHIONINE SULFOXIDE REDUCTASE"/>
    <property type="match status" value="1"/>
</dbReference>
<dbReference type="PANTHER" id="PTHR42799:SF2">
    <property type="entry name" value="MITOCHONDRIAL PEPTIDE METHIONINE SULFOXIDE REDUCTASE"/>
    <property type="match status" value="1"/>
</dbReference>
<dbReference type="Pfam" id="PF01625">
    <property type="entry name" value="PMSR"/>
    <property type="match status" value="1"/>
</dbReference>
<dbReference type="SUPFAM" id="SSF55068">
    <property type="entry name" value="Peptide methionine sulfoxide reductase"/>
    <property type="match status" value="1"/>
</dbReference>
<sequence>MLGIGAFKQRMPRSGEALPGRTQALPLHNTHLINGHPLRGEFTGLAQVQFGLGCFWGAERKFWNVPGVYTTAVGYAGGKTPNATYSEVCSGQTGHTEAVLVVYDAQAVSFEQLLRTFWESHDPTQGMQQGNDVGTQYRSAIYCSTQAQYDAAIASRDAYQQQLTAAGYGDITTEILYPAPTFYYAEDDHQQYLAKHPNGYCGLGGTGVSCPIGLDA</sequence>